<gene>
    <name evidence="3" type="primary">Hydph10</name>
    <name type="ORF">PLEOSDRAFT_167436</name>
</gene>
<organism>
    <name type="scientific">Pleurotus ostreatus (strain PC15)</name>
    <name type="common">Oyster mushroom</name>
    <dbReference type="NCBI Taxonomy" id="1137138"/>
    <lineage>
        <taxon>Eukaryota</taxon>
        <taxon>Fungi</taxon>
        <taxon>Dikarya</taxon>
        <taxon>Basidiomycota</taxon>
        <taxon>Agaricomycotina</taxon>
        <taxon>Agaricomycetes</taxon>
        <taxon>Agaricomycetidae</taxon>
        <taxon>Agaricales</taxon>
        <taxon>Pleurotineae</taxon>
        <taxon>Pleurotaceae</taxon>
        <taxon>Pleurotus</taxon>
    </lineage>
</organism>
<keyword id="KW-0134">Cell wall</keyword>
<keyword id="KW-1015">Disulfide bond</keyword>
<keyword id="KW-1185">Reference proteome</keyword>
<keyword id="KW-0964">Secreted</keyword>
<keyword id="KW-0732">Signal</keyword>
<sequence length="111" mass="11054">MLFNTFVVTALASLAAATPTRRNEPAAGSCSTGELQCCKSVQSADSKSLTSLFGLLGLVVGDITGLVGVTCSPVTVVGAGGAQCNAQAVCCNDNSFNGLIALGCTPINLNL</sequence>
<name>HYD10_PLEO1</name>
<accession>A0A067NN74</accession>
<protein>
    <recommendedName>
        <fullName evidence="3">Class I hydrophobin 10</fullName>
    </recommendedName>
</protein>
<proteinExistence type="inferred from homology"/>
<feature type="signal peptide" evidence="2">
    <location>
        <begin position="1"/>
        <end position="17"/>
    </location>
</feature>
<feature type="chain" id="PRO_5013988166" description="Class I hydrophobin 10">
    <location>
        <begin position="18"/>
        <end position="111"/>
    </location>
</feature>
<feature type="disulfide bond" evidence="1">
    <location>
        <begin position="30"/>
        <end position="90"/>
    </location>
</feature>
<feature type="disulfide bond" evidence="1">
    <location>
        <begin position="37"/>
        <end position="84"/>
    </location>
</feature>
<feature type="disulfide bond" evidence="1">
    <location>
        <begin position="38"/>
        <end position="71"/>
    </location>
</feature>
<feature type="disulfide bond" evidence="1">
    <location>
        <begin position="91"/>
        <end position="104"/>
    </location>
</feature>
<reference key="1">
    <citation type="journal article" date="2014" name="Proc. Natl. Acad. Sci. U.S.A.">
        <title>Extensive sampling of basidiomycete genomes demonstrates inadequacy of the white-rot/brown-rot paradigm for wood decay fungi.</title>
        <authorList>
            <person name="Riley R."/>
            <person name="Salamov A.A."/>
            <person name="Brown D.W."/>
            <person name="Nagy L.G."/>
            <person name="Floudas D."/>
            <person name="Held B.W."/>
            <person name="Levasseur A."/>
            <person name="Lombard V."/>
            <person name="Morin E."/>
            <person name="Otillar R."/>
            <person name="Lindquist E.A."/>
            <person name="Sun H."/>
            <person name="LaButti K.M."/>
            <person name="Schmutz J."/>
            <person name="Jabbour D."/>
            <person name="Luo H."/>
            <person name="Baker S.E."/>
            <person name="Pisabarro A.G."/>
            <person name="Walton J.D."/>
            <person name="Blanchette R.A."/>
            <person name="Henrissat B."/>
            <person name="Martin F."/>
            <person name="Cullen D."/>
            <person name="Hibbett D.S."/>
            <person name="Grigoriev I.V."/>
        </authorList>
    </citation>
    <scope>NUCLEOTIDE SEQUENCE [LARGE SCALE GENOMIC DNA]</scope>
    <source>
        <strain>PC15</strain>
    </source>
</reference>
<reference key="2">
    <citation type="journal article" date="2021" name="Microbiol. Res.">
        <title>Identification of hydrophobin genes and their physiological functions related to growth and development in Pleurotus ostreatus.</title>
        <authorList>
            <person name="Xu D."/>
            <person name="Wang Y."/>
            <person name="Keerio A.A."/>
            <person name="Ma A."/>
        </authorList>
    </citation>
    <scope>IDENTIFICATION</scope>
</reference>
<dbReference type="EMBL" id="KL198007">
    <property type="protein sequence ID" value="KDQ29538.1"/>
    <property type="molecule type" value="Genomic_DNA"/>
</dbReference>
<dbReference type="STRING" id="1137138.A0A067NN74"/>
<dbReference type="VEuPathDB" id="FungiDB:PLEOSDRAFT_167436"/>
<dbReference type="HOGENOM" id="CLU_105134_2_0_1"/>
<dbReference type="InParanoid" id="A0A067NN74"/>
<dbReference type="OrthoDB" id="138913at5338"/>
<dbReference type="Proteomes" id="UP000027073">
    <property type="component" value="Unassembled WGS sequence"/>
</dbReference>
<dbReference type="GO" id="GO:0005576">
    <property type="term" value="C:extracellular region"/>
    <property type="evidence" value="ECO:0007669"/>
    <property type="project" value="UniProtKB-KW"/>
</dbReference>
<dbReference type="GO" id="GO:0009277">
    <property type="term" value="C:fungal-type cell wall"/>
    <property type="evidence" value="ECO:0007669"/>
    <property type="project" value="InterPro"/>
</dbReference>
<dbReference type="GO" id="GO:0005199">
    <property type="term" value="F:structural constituent of cell wall"/>
    <property type="evidence" value="ECO:0007669"/>
    <property type="project" value="InterPro"/>
</dbReference>
<dbReference type="CDD" id="cd23507">
    <property type="entry name" value="hydrophobin_I"/>
    <property type="match status" value="1"/>
</dbReference>
<dbReference type="InterPro" id="IPR001338">
    <property type="entry name" value="Hydrophobin"/>
</dbReference>
<dbReference type="Pfam" id="PF01185">
    <property type="entry name" value="Hydrophobin"/>
    <property type="match status" value="1"/>
</dbReference>
<dbReference type="SMART" id="SM00075">
    <property type="entry name" value="HYDRO"/>
    <property type="match status" value="1"/>
</dbReference>
<evidence type="ECO:0000250" key="1">
    <source>
        <dbReference type="UniProtKB" id="Q04571"/>
    </source>
</evidence>
<evidence type="ECO:0000255" key="2"/>
<evidence type="ECO:0000303" key="3">
    <source>
    </source>
</evidence>
<evidence type="ECO:0000305" key="4"/>
<evidence type="ECO:0000305" key="5">
    <source>
    </source>
</evidence>
<comment type="function">
    <text evidence="4">Aerial growth, conidiation, and dispersal of filamentous fungi in the environment rely upon a capability of their secreting small amphipathic proteins called hydrophobins (HPBs) with low sequence identity. Class I can self-assemble into an outermost layer of rodlet bundles on aerial cell surfaces, conferring cellular hydrophobicity that supports fungal growth, development and dispersal; whereas Class II form highly ordered films at water-air interfaces through intermolecular interactions but contribute nothing to the rodlet structure.</text>
</comment>
<comment type="subunit">
    <text evidence="1">Self-assembles to form functional amyloid fibrils called rodlets. Self-assembly into fibrillar rodlets occurs spontaneously at hydrophobic:hydrophilic interfaces and the rodlets further associate laterally to form amphipathic monolayers.</text>
</comment>
<comment type="subcellular location">
    <subcellularLocation>
        <location evidence="5">Secreted</location>
    </subcellularLocation>
    <subcellularLocation>
        <location evidence="5">Secreted</location>
        <location evidence="5">Cell wall</location>
    </subcellularLocation>
</comment>
<comment type="similarity">
    <text evidence="4">Belongs to the fungal hydrophobin family.</text>
</comment>